<proteinExistence type="inferred from homology"/>
<comment type="function">
    <text evidence="1">Facilitates the functional incorporation of the urease nickel metallocenter. This process requires GTP hydrolysis, probably effectuated by UreG.</text>
</comment>
<comment type="subunit">
    <text evidence="1">Homodimer. UreD, UreF and UreG form a complex that acts as a GTP-hydrolysis-dependent molecular chaperone, activating the urease apoprotein by helping to assemble the nickel containing metallocenter of UreC. The UreE protein probably delivers the nickel.</text>
</comment>
<comment type="subcellular location">
    <subcellularLocation>
        <location evidence="1">Cytoplasm</location>
    </subcellularLocation>
</comment>
<comment type="similarity">
    <text evidence="1">Belongs to the SIMIBI class G3E GTPase family. UreG subfamily.</text>
</comment>
<organism>
    <name type="scientific">Pseudomonas savastanoi pv. phaseolicola (strain 1448A / Race 6)</name>
    <name type="common">Pseudomonas syringae pv. phaseolicola (strain 1448A / Race 6)</name>
    <dbReference type="NCBI Taxonomy" id="264730"/>
    <lineage>
        <taxon>Bacteria</taxon>
        <taxon>Pseudomonadati</taxon>
        <taxon>Pseudomonadota</taxon>
        <taxon>Gammaproteobacteria</taxon>
        <taxon>Pseudomonadales</taxon>
        <taxon>Pseudomonadaceae</taxon>
        <taxon>Pseudomonas</taxon>
    </lineage>
</organism>
<feature type="chain" id="PRO_0000347430" description="Urease accessory protein UreG">
    <location>
        <begin position="1"/>
        <end position="205"/>
    </location>
</feature>
<feature type="binding site" evidence="1">
    <location>
        <begin position="12"/>
        <end position="19"/>
    </location>
    <ligand>
        <name>GTP</name>
        <dbReference type="ChEBI" id="CHEBI:37565"/>
    </ligand>
</feature>
<evidence type="ECO:0000255" key="1">
    <source>
        <dbReference type="HAMAP-Rule" id="MF_01389"/>
    </source>
</evidence>
<keyword id="KW-0143">Chaperone</keyword>
<keyword id="KW-0963">Cytoplasm</keyword>
<keyword id="KW-0342">GTP-binding</keyword>
<keyword id="KW-0996">Nickel insertion</keyword>
<keyword id="KW-0547">Nucleotide-binding</keyword>
<name>UREG_PSE14</name>
<reference key="1">
    <citation type="journal article" date="2005" name="J. Bacteriol.">
        <title>Whole-genome sequence analysis of Pseudomonas syringae pv. phaseolicola 1448A reveals divergence among pathovars in genes involved in virulence and transposition.</title>
        <authorList>
            <person name="Joardar V."/>
            <person name="Lindeberg M."/>
            <person name="Jackson R.W."/>
            <person name="Selengut J."/>
            <person name="Dodson R."/>
            <person name="Brinkac L.M."/>
            <person name="Daugherty S.C."/>
            <person name="DeBoy R.T."/>
            <person name="Durkin A.S."/>
            <person name="Gwinn Giglio M."/>
            <person name="Madupu R."/>
            <person name="Nelson W.C."/>
            <person name="Rosovitz M.J."/>
            <person name="Sullivan S.A."/>
            <person name="Crabtree J."/>
            <person name="Creasy T."/>
            <person name="Davidsen T.M."/>
            <person name="Haft D.H."/>
            <person name="Zafar N."/>
            <person name="Zhou L."/>
            <person name="Halpin R."/>
            <person name="Holley T."/>
            <person name="Khouri H.M."/>
            <person name="Feldblyum T.V."/>
            <person name="White O."/>
            <person name="Fraser C.M."/>
            <person name="Chatterjee A.K."/>
            <person name="Cartinhour S."/>
            <person name="Schneider D."/>
            <person name="Mansfield J.W."/>
            <person name="Collmer A."/>
            <person name="Buell R."/>
        </authorList>
    </citation>
    <scope>NUCLEOTIDE SEQUENCE [LARGE SCALE GENOMIC DNA]</scope>
    <source>
        <strain>1448A / Race 6</strain>
    </source>
</reference>
<protein>
    <recommendedName>
        <fullName evidence="1">Urease accessory protein UreG</fullName>
    </recommendedName>
</protein>
<sequence length="205" mass="22026">MNSQPLRVGIGGPVGSGKTALTLALCLALRDRYNLAVVTNDIYTREDADFLVRNEALAPERIIGVETGGCPHTAIREDASINLEAVDQLNRRFEGLDLIIVESGGDNLSATFSPELSDLTIYVIDVSAGDKLPRKGGPGICKSDLLVINKIDLAPLVGASLEMMDSDTRRMRGEKPFVFSNQKTGQGLEQIIAFIERQGLLTAAA</sequence>
<dbReference type="EMBL" id="CP000058">
    <property type="protein sequence ID" value="AAZ32981.1"/>
    <property type="molecule type" value="Genomic_DNA"/>
</dbReference>
<dbReference type="RefSeq" id="WP_003368915.1">
    <property type="nucleotide sequence ID" value="NC_005773.3"/>
</dbReference>
<dbReference type="SMR" id="Q48DC7"/>
<dbReference type="GeneID" id="69861510"/>
<dbReference type="KEGG" id="psp:PSPPH_4498"/>
<dbReference type="eggNOG" id="COG0378">
    <property type="taxonomic scope" value="Bacteria"/>
</dbReference>
<dbReference type="HOGENOM" id="CLU_072144_1_0_6"/>
<dbReference type="Proteomes" id="UP000000551">
    <property type="component" value="Chromosome"/>
</dbReference>
<dbReference type="GO" id="GO:0005737">
    <property type="term" value="C:cytoplasm"/>
    <property type="evidence" value="ECO:0007669"/>
    <property type="project" value="UniProtKB-SubCell"/>
</dbReference>
<dbReference type="GO" id="GO:0005525">
    <property type="term" value="F:GTP binding"/>
    <property type="evidence" value="ECO:0007669"/>
    <property type="project" value="UniProtKB-KW"/>
</dbReference>
<dbReference type="GO" id="GO:0003924">
    <property type="term" value="F:GTPase activity"/>
    <property type="evidence" value="ECO:0007669"/>
    <property type="project" value="InterPro"/>
</dbReference>
<dbReference type="GO" id="GO:0016151">
    <property type="term" value="F:nickel cation binding"/>
    <property type="evidence" value="ECO:0007669"/>
    <property type="project" value="UniProtKB-UniRule"/>
</dbReference>
<dbReference type="GO" id="GO:0043419">
    <property type="term" value="P:urea catabolic process"/>
    <property type="evidence" value="ECO:0007669"/>
    <property type="project" value="InterPro"/>
</dbReference>
<dbReference type="CDD" id="cd05540">
    <property type="entry name" value="UreG"/>
    <property type="match status" value="1"/>
</dbReference>
<dbReference type="FunFam" id="3.40.50.300:FF:000208">
    <property type="entry name" value="Urease accessory protein UreG"/>
    <property type="match status" value="1"/>
</dbReference>
<dbReference type="Gene3D" id="3.40.50.300">
    <property type="entry name" value="P-loop containing nucleotide triphosphate hydrolases"/>
    <property type="match status" value="1"/>
</dbReference>
<dbReference type="HAMAP" id="MF_01389">
    <property type="entry name" value="UreG"/>
    <property type="match status" value="1"/>
</dbReference>
<dbReference type="InterPro" id="IPR003495">
    <property type="entry name" value="CobW/HypB/UreG_nucleotide-bd"/>
</dbReference>
<dbReference type="InterPro" id="IPR027417">
    <property type="entry name" value="P-loop_NTPase"/>
</dbReference>
<dbReference type="InterPro" id="IPR004400">
    <property type="entry name" value="UreG"/>
</dbReference>
<dbReference type="NCBIfam" id="TIGR00101">
    <property type="entry name" value="ureG"/>
    <property type="match status" value="1"/>
</dbReference>
<dbReference type="PANTHER" id="PTHR31715">
    <property type="entry name" value="UREASE ACCESSORY PROTEIN G"/>
    <property type="match status" value="1"/>
</dbReference>
<dbReference type="PANTHER" id="PTHR31715:SF0">
    <property type="entry name" value="UREASE ACCESSORY PROTEIN G"/>
    <property type="match status" value="1"/>
</dbReference>
<dbReference type="Pfam" id="PF02492">
    <property type="entry name" value="cobW"/>
    <property type="match status" value="1"/>
</dbReference>
<dbReference type="PIRSF" id="PIRSF005624">
    <property type="entry name" value="Ni-bind_GTPase"/>
    <property type="match status" value="1"/>
</dbReference>
<dbReference type="SUPFAM" id="SSF52540">
    <property type="entry name" value="P-loop containing nucleoside triphosphate hydrolases"/>
    <property type="match status" value="1"/>
</dbReference>
<gene>
    <name evidence="1" type="primary">ureG</name>
    <name type="ordered locus">PSPPH_4498</name>
</gene>
<accession>Q48DC7</accession>